<comment type="function">
    <text evidence="1">Inhibits post-transcriptional processing of cellular pre-mRNA, by binding and inhibiting two cellular proteins that are required for the 3'-end processing of cellular pre-mRNAs: the 30 kDa cleavage and polyadenylation specificity factor/CPSF4 and the poly(A)-binding protein 2/PABPN1. In turn, unprocessed 3' end pre-mRNAs accumulate in the host nucleus and are no longer exported to the cytoplasm. Cellular protein synthesis is thereby shut off very early after virus infection. Viral protein synthesis is not affected by the inhibition of the cellular 3' end processing machinery because the poly(A) tails of viral mRNAs are produced by the viral polymerase through a stuttering mechanism. Prevents the establishment of the cellular antiviral state by inhibiting TRIM25-mediated RIGI ubiquitination, which normally triggers the antiviral transduction signal that leads to the activation of type I IFN genes by transcription factors IRF3 and IRF7. Also binds poly(A) and U6 snRNA. Inhibits the integrated stress response (ISR) in the infected cell by blocking dsRNA binding by EIF2AK2/PKR and further phosphorylation of EIF2S1/EIF-2ALPHA. Stress granule formation is thus inhibited, which allows protein synthesis and viral replication.</text>
</comment>
<comment type="subunit">
    <text evidence="1">Homodimer. Interacts with host TRIM25 (via coiled coil); this interaction specifically inhibits TRIM25 multimerization and TRIM25-mediated RIGI CARD ubiquitination. Interacts with human EIF2AK2/PKR, CPSF4, IVNS1ABP and PABPN1.</text>
</comment>
<comment type="subcellular location">
    <subcellularLocation>
        <location evidence="1">Host nucleus</location>
    </subcellularLocation>
    <subcellularLocation>
        <location evidence="1">Host cytoplasm</location>
    </subcellularLocation>
    <text evidence="1">In uninfected, transfected cells, NS1 is localized in the nucleus. Only in virus infected cells, the nuclear export signal is unveiled, presumably by a viral protein, and a fraction of NS1 is exported in the cytoplasm.</text>
</comment>
<comment type="alternative products">
    <event type="alternative splicing"/>
    <isoform>
        <id>P69271-1</id>
        <name>NS1</name>
        <sequence type="displayed"/>
    </isoform>
    <isoform>
        <id>P13144-1</id>
        <name>NEP</name>
        <name>NS2</name>
        <sequence type="external"/>
    </isoform>
</comment>
<comment type="domain">
    <text evidence="1">The dsRNA-binding region is required for suppression of RNA silencing.</text>
</comment>
<comment type="PTM">
    <text evidence="1">Upon interferon induction, ISGylated via host HERC5; this results in the impairment of NS1 interaction with RNA targets due to its inability to form homodimers and to interact with host EIF2AK2/PKR.</text>
</comment>
<comment type="similarity">
    <text evidence="1">Belongs to the influenza A viruses NS1 family.</text>
</comment>
<dbReference type="EMBL" id="M25372">
    <property type="protein sequence ID" value="AAA43529.1"/>
    <property type="molecule type" value="Genomic_RNA"/>
</dbReference>
<dbReference type="PIR" id="C32663">
    <property type="entry name" value="MNIVA6"/>
</dbReference>
<dbReference type="SMR" id="P69271"/>
<dbReference type="GO" id="GO:0030430">
    <property type="term" value="C:host cell cytoplasm"/>
    <property type="evidence" value="ECO:0007669"/>
    <property type="project" value="UniProtKB-SubCell"/>
</dbReference>
<dbReference type="GO" id="GO:0042025">
    <property type="term" value="C:host cell nucleus"/>
    <property type="evidence" value="ECO:0007669"/>
    <property type="project" value="UniProtKB-SubCell"/>
</dbReference>
<dbReference type="GO" id="GO:0030291">
    <property type="term" value="F:protein serine/threonine kinase inhibitor activity"/>
    <property type="evidence" value="ECO:0007669"/>
    <property type="project" value="UniProtKB-KW"/>
</dbReference>
<dbReference type="GO" id="GO:0003723">
    <property type="term" value="F:RNA binding"/>
    <property type="evidence" value="ECO:0007669"/>
    <property type="project" value="UniProtKB-KW"/>
</dbReference>
<dbReference type="GO" id="GO:0039540">
    <property type="term" value="P:symbiont-mediated suppression of host cytoplasmic pattern recognition receptor signaling pathway via inhibition of RIG-I activity"/>
    <property type="evidence" value="ECO:0007669"/>
    <property type="project" value="UniProtKB-KW"/>
</dbReference>
<dbReference type="GO" id="GO:0039657">
    <property type="term" value="P:symbiont-mediated suppression of host gene expression"/>
    <property type="evidence" value="ECO:0007669"/>
    <property type="project" value="UniProtKB-KW"/>
</dbReference>
<dbReference type="GO" id="GO:0039524">
    <property type="term" value="P:symbiont-mediated suppression of host mRNA processing"/>
    <property type="evidence" value="ECO:0007669"/>
    <property type="project" value="UniProtKB-KW"/>
</dbReference>
<dbReference type="GO" id="GO:0039580">
    <property type="term" value="P:symbiont-mediated suppression of host PKR/eIFalpha signaling"/>
    <property type="evidence" value="ECO:0007669"/>
    <property type="project" value="UniProtKB-KW"/>
</dbReference>
<dbReference type="GO" id="GO:0039502">
    <property type="term" value="P:symbiont-mediated suppression of host type I interferon-mediated signaling pathway"/>
    <property type="evidence" value="ECO:0007669"/>
    <property type="project" value="UniProtKB-KW"/>
</dbReference>
<dbReference type="Gene3D" id="3.30.420.330">
    <property type="entry name" value="Influenza virus non-structural protein, effector domain"/>
    <property type="match status" value="1"/>
</dbReference>
<dbReference type="Gene3D" id="1.10.287.10">
    <property type="entry name" value="S15/NS1, RNA-binding"/>
    <property type="match status" value="1"/>
</dbReference>
<dbReference type="HAMAP" id="MF_04066">
    <property type="entry name" value="INFV_NS1"/>
    <property type="match status" value="1"/>
</dbReference>
<dbReference type="InterPro" id="IPR004208">
    <property type="entry name" value="NS1"/>
</dbReference>
<dbReference type="InterPro" id="IPR000256">
    <property type="entry name" value="NS1A"/>
</dbReference>
<dbReference type="InterPro" id="IPR038064">
    <property type="entry name" value="NS1A_effect_dom-like_sf"/>
</dbReference>
<dbReference type="InterPro" id="IPR009068">
    <property type="entry name" value="uS15_NS1_RNA-bd_sf"/>
</dbReference>
<dbReference type="Pfam" id="PF00600">
    <property type="entry name" value="Flu_NS1"/>
    <property type="match status" value="1"/>
</dbReference>
<dbReference type="SUPFAM" id="SSF143021">
    <property type="entry name" value="Ns1 effector domain-like"/>
    <property type="match status" value="1"/>
</dbReference>
<dbReference type="SUPFAM" id="SSF47060">
    <property type="entry name" value="S15/NS1 RNA-binding domain"/>
    <property type="match status" value="1"/>
</dbReference>
<name>NS1_I78A1</name>
<sequence>MDSNTITSFQVDCYLWHIRKLLSMRDMCDAPFDDRLRRDQKALKGRGSTLGLDLRVATMEGKKIVEDILKSETDENLKIAIASSPAPRYITDMSIEEISREWYMLMPRQKITGGLMVKMDQAIMDKRITLKANFSVLFDQLETLVSLRAFTDDGAIVAEISPIPSMPGHSTEDVKNAIGILIGGLEWNDNSIRASENIQRFAWGIRDENGGPPLPPKQKRYMARRVESEV</sequence>
<organism>
    <name type="scientific">Influenza A virus (strain A/Mallard/Alberta/827/1978 H8N4)</name>
    <dbReference type="NCBI Taxonomy" id="11432"/>
    <lineage>
        <taxon>Viruses</taxon>
        <taxon>Riboviria</taxon>
        <taxon>Orthornavirae</taxon>
        <taxon>Negarnaviricota</taxon>
        <taxon>Polyploviricotina</taxon>
        <taxon>Insthoviricetes</taxon>
        <taxon>Articulavirales</taxon>
        <taxon>Orthomyxoviridae</taxon>
        <taxon>Alphainfluenzavirus</taxon>
        <taxon>Alphainfluenzavirus influenzae</taxon>
        <taxon>Influenza A virus</taxon>
    </lineage>
</organism>
<gene>
    <name evidence="1" type="primary">NS</name>
</gene>
<reference key="1">
    <citation type="journal article" date="1989" name="Virology">
        <title>The B allele of the NS gene of avian influenza viruses, but not the A allele, attenuates a human influenza A virus for squirrel monkeys.</title>
        <authorList>
            <person name="Treanor J.J."/>
            <person name="Snyder M.H."/>
            <person name="London W.T."/>
            <person name="Murphy B.R."/>
        </authorList>
    </citation>
    <scope>NUCLEOTIDE SEQUENCE [GENOMIC RNA]</scope>
</reference>
<reference key="2">
    <citation type="journal article" date="2003" name="Virology">
        <title>Intracellular warfare between human influenza viruses and human cells: the roles of the viral NS1 protein.</title>
        <authorList>
            <person name="Krug R.M."/>
            <person name="Yuan W."/>
            <person name="Noah D.L."/>
            <person name="Latham A.G."/>
        </authorList>
    </citation>
    <scope>REVIEW</scope>
</reference>
<keyword id="KW-0025">Alternative splicing</keyword>
<keyword id="KW-1262">Eukaryotic host gene expression shutoff by virus</keyword>
<keyword id="KW-1035">Host cytoplasm</keyword>
<keyword id="KW-1190">Host gene expression shutoff by virus</keyword>
<keyword id="KW-1192">Host mRNA suppression by virus</keyword>
<keyword id="KW-1048">Host nucleus</keyword>
<keyword id="KW-0945">Host-virus interaction</keyword>
<keyword id="KW-1090">Inhibition of host innate immune response by virus</keyword>
<keyword id="KW-1114">Inhibition of host interferon signaling pathway by virus</keyword>
<keyword id="KW-1102">Inhibition of host PKR by virus</keyword>
<keyword id="KW-1103">Inhibition of host pre-mRNA processing by virus</keyword>
<keyword id="KW-1088">Inhibition of host RIG-I by virus</keyword>
<keyword id="KW-1113">Inhibition of host RLR pathway by virus</keyword>
<keyword id="KW-0922">Interferon antiviral system evasion</keyword>
<keyword id="KW-0694">RNA-binding</keyword>
<keyword id="KW-0832">Ubl conjugation</keyword>
<keyword id="KW-0899">Viral immunoevasion</keyword>
<protein>
    <recommendedName>
        <fullName evidence="1">Non-structural protein 1</fullName>
        <shortName evidence="1">NS1</shortName>
    </recommendedName>
    <alternativeName>
        <fullName evidence="1">NS1A</fullName>
    </alternativeName>
</protein>
<accession>P69271</accession>
<accession>P03501</accession>
<accession>P13136</accession>
<organismHost>
    <name type="scientific">Aves</name>
    <dbReference type="NCBI Taxonomy" id="8782"/>
</organismHost>
<evidence type="ECO:0000255" key="1">
    <source>
        <dbReference type="HAMAP-Rule" id="MF_04066"/>
    </source>
</evidence>
<evidence type="ECO:0000256" key="2">
    <source>
        <dbReference type="SAM" id="MobiDB-lite"/>
    </source>
</evidence>
<feature type="chain" id="PRO_0000078937" description="Non-structural protein 1">
    <location>
        <begin position="1"/>
        <end position="230"/>
    </location>
</feature>
<feature type="region of interest" description="RNA-binding and homodimerization" evidence="1">
    <location>
        <begin position="1"/>
        <end position="73"/>
    </location>
</feature>
<feature type="region of interest" description="CPSF4-binding" evidence="1">
    <location>
        <begin position="180"/>
        <end position="215"/>
    </location>
</feature>
<feature type="region of interest" description="Disordered" evidence="2">
    <location>
        <begin position="209"/>
        <end position="230"/>
    </location>
</feature>
<feature type="region of interest" description="PABPN1-binding" evidence="1">
    <location>
        <begin position="223"/>
        <end position="230"/>
    </location>
</feature>
<feature type="short sequence motif" description="Nuclear localization signal" evidence="1">
    <location>
        <begin position="34"/>
        <end position="38"/>
    </location>
</feature>
<feature type="short sequence motif" description="Nuclear export signal" evidence="1">
    <location>
        <begin position="137"/>
        <end position="146"/>
    </location>
</feature>
<proteinExistence type="inferred from homology"/>